<protein>
    <recommendedName>
        <fullName>Syntaxin-binding protein 5</fullName>
    </recommendedName>
    <alternativeName>
        <fullName>Lethal(2) giant larvae protein homolog 3</fullName>
    </alternativeName>
    <alternativeName>
        <fullName>Tomosyn-1</fullName>
    </alternativeName>
</protein>
<feature type="chain" id="PRO_0000051244" description="Syntaxin-binding protein 5">
    <location>
        <begin position="1"/>
        <end position="1151"/>
    </location>
</feature>
<feature type="repeat" description="WD 1">
    <location>
        <begin position="61"/>
        <end position="94"/>
    </location>
</feature>
<feature type="repeat" description="WD 2">
    <location>
        <begin position="101"/>
        <end position="140"/>
    </location>
</feature>
<feature type="repeat" description="WD 3">
    <location>
        <begin position="145"/>
        <end position="181"/>
    </location>
</feature>
<feature type="repeat" description="WD 4">
    <location>
        <begin position="200"/>
        <end position="234"/>
    </location>
</feature>
<feature type="repeat" description="WD 5">
    <location>
        <begin position="240"/>
        <end position="272"/>
    </location>
</feature>
<feature type="repeat" description="WD 6">
    <location>
        <begin position="294"/>
        <end position="336"/>
    </location>
</feature>
<feature type="repeat" description="WD 7">
    <location>
        <begin position="344"/>
        <end position="378"/>
    </location>
</feature>
<feature type="repeat" description="WD 8">
    <location>
        <begin position="400"/>
        <end position="477"/>
    </location>
</feature>
<feature type="repeat" description="WD 9">
    <location>
        <begin position="505"/>
        <end position="619"/>
    </location>
</feature>
<feature type="repeat" description="WD 10">
    <location>
        <begin position="633"/>
        <end position="695"/>
    </location>
</feature>
<feature type="repeat" description="WD 11">
    <location>
        <begin position="794"/>
        <end position="851"/>
    </location>
</feature>
<feature type="repeat" description="WD 12">
    <location>
        <begin position="860"/>
        <end position="934"/>
    </location>
</feature>
<feature type="repeat" description="WD 13">
    <location>
        <begin position="939"/>
        <end position="983"/>
    </location>
</feature>
<feature type="repeat" description="WD 14">
    <location>
        <begin position="997"/>
        <end position="1020"/>
    </location>
</feature>
<feature type="domain" description="v-SNARE coiled-coil homology" evidence="4">
    <location>
        <begin position="1086"/>
        <end position="1146"/>
    </location>
</feature>
<feature type="region of interest" description="Disordered" evidence="5">
    <location>
        <begin position="14"/>
        <end position="34"/>
    </location>
</feature>
<feature type="region of interest" description="Disordered" evidence="5">
    <location>
        <begin position="555"/>
        <end position="595"/>
    </location>
</feature>
<feature type="region of interest" description="Disordered" evidence="5">
    <location>
        <begin position="674"/>
        <end position="729"/>
    </location>
</feature>
<feature type="region of interest" description="Disordered" evidence="5">
    <location>
        <begin position="881"/>
        <end position="906"/>
    </location>
</feature>
<feature type="compositionally biased region" description="Low complexity" evidence="5">
    <location>
        <begin position="17"/>
        <end position="27"/>
    </location>
</feature>
<feature type="compositionally biased region" description="Low complexity" evidence="5">
    <location>
        <begin position="712"/>
        <end position="721"/>
    </location>
</feature>
<feature type="compositionally biased region" description="Basic and acidic residues" evidence="5">
    <location>
        <begin position="881"/>
        <end position="892"/>
    </location>
</feature>
<feature type="modified residue" description="Phosphoserine" evidence="12">
    <location>
        <position position="692"/>
    </location>
</feature>
<feature type="modified residue" description="Phosphoserine; by PKA" evidence="3">
    <location>
        <position position="723"/>
    </location>
</feature>
<feature type="modified residue" description="Phosphoserine" evidence="10 12 13">
    <location>
        <position position="759"/>
    </location>
</feature>
<feature type="modified residue" description="Phosphothreonine" evidence="9">
    <location>
        <position position="762"/>
    </location>
</feature>
<feature type="modified residue" description="Phosphoserine" evidence="2">
    <location>
        <position position="782"/>
    </location>
</feature>
<feature type="modified residue" description="Phosphothreonine" evidence="2">
    <location>
        <position position="784"/>
    </location>
</feature>
<feature type="modified residue" description="Phosphoserine" evidence="11">
    <location>
        <position position="785"/>
    </location>
</feature>
<feature type="modified residue" description="Phosphoserine" evidence="2">
    <location>
        <position position="900"/>
    </location>
</feature>
<feature type="modified residue" description="Phosphoserine" evidence="2">
    <location>
        <position position="902"/>
    </location>
</feature>
<feature type="modified residue" description="Phosphothreonine" evidence="13">
    <location>
        <position position="1039"/>
    </location>
</feature>
<feature type="modified residue" description="Phosphoserine" evidence="2">
    <location>
        <position position="1058"/>
    </location>
</feature>
<feature type="modified residue" description="Phosphoserine" evidence="12">
    <location>
        <position position="1131"/>
    </location>
</feature>
<feature type="splice variant" id="VSP_016204" description="In isoform 3." evidence="8">
    <location>
        <begin position="716"/>
        <end position="768"/>
    </location>
</feature>
<feature type="splice variant" id="VSP_016205" description="In isoform 2." evidence="6 7">
    <location>
        <begin position="716"/>
        <end position="751"/>
    </location>
</feature>
<feature type="sequence variant" id="VAR_035235" description="In dbSNP:rs1039084.">
    <original>N</original>
    <variation>S</variation>
    <location>
        <position position="436"/>
    </location>
</feature>
<evidence type="ECO:0000250" key="1"/>
<evidence type="ECO:0000250" key="2">
    <source>
        <dbReference type="UniProtKB" id="Q8K400"/>
    </source>
</evidence>
<evidence type="ECO:0000250" key="3">
    <source>
        <dbReference type="UniProtKB" id="Q9WU70"/>
    </source>
</evidence>
<evidence type="ECO:0000255" key="4">
    <source>
        <dbReference type="PROSITE-ProRule" id="PRU00290"/>
    </source>
</evidence>
<evidence type="ECO:0000256" key="5">
    <source>
        <dbReference type="SAM" id="MobiDB-lite"/>
    </source>
</evidence>
<evidence type="ECO:0000303" key="6">
    <source>
    </source>
</evidence>
<evidence type="ECO:0000303" key="7">
    <source>
    </source>
</evidence>
<evidence type="ECO:0000305" key="8"/>
<evidence type="ECO:0007744" key="9">
    <source>
    </source>
</evidence>
<evidence type="ECO:0007744" key="10">
    <source>
    </source>
</evidence>
<evidence type="ECO:0007744" key="11">
    <source>
    </source>
</evidence>
<evidence type="ECO:0007744" key="12">
    <source>
    </source>
</evidence>
<evidence type="ECO:0007744" key="13">
    <source>
    </source>
</evidence>
<proteinExistence type="evidence at protein level"/>
<reference key="1">
    <citation type="journal article" date="2003" name="Nature">
        <title>The DNA sequence and analysis of human chromosome 6.</title>
        <authorList>
            <person name="Mungall A.J."/>
            <person name="Palmer S.A."/>
            <person name="Sims S.K."/>
            <person name="Edwards C.A."/>
            <person name="Ashurst J.L."/>
            <person name="Wilming L."/>
            <person name="Jones M.C."/>
            <person name="Horton R."/>
            <person name="Hunt S.E."/>
            <person name="Scott C.E."/>
            <person name="Gilbert J.G.R."/>
            <person name="Clamp M.E."/>
            <person name="Bethel G."/>
            <person name="Milne S."/>
            <person name="Ainscough R."/>
            <person name="Almeida J.P."/>
            <person name="Ambrose K.D."/>
            <person name="Andrews T.D."/>
            <person name="Ashwell R.I.S."/>
            <person name="Babbage A.K."/>
            <person name="Bagguley C.L."/>
            <person name="Bailey J."/>
            <person name="Banerjee R."/>
            <person name="Barker D.J."/>
            <person name="Barlow K.F."/>
            <person name="Bates K."/>
            <person name="Beare D.M."/>
            <person name="Beasley H."/>
            <person name="Beasley O."/>
            <person name="Bird C.P."/>
            <person name="Blakey S.E."/>
            <person name="Bray-Allen S."/>
            <person name="Brook J."/>
            <person name="Brown A.J."/>
            <person name="Brown J.Y."/>
            <person name="Burford D.C."/>
            <person name="Burrill W."/>
            <person name="Burton J."/>
            <person name="Carder C."/>
            <person name="Carter N.P."/>
            <person name="Chapman J.C."/>
            <person name="Clark S.Y."/>
            <person name="Clark G."/>
            <person name="Clee C.M."/>
            <person name="Clegg S."/>
            <person name="Cobley V."/>
            <person name="Collier R.E."/>
            <person name="Collins J.E."/>
            <person name="Colman L.K."/>
            <person name="Corby N.R."/>
            <person name="Coville G.J."/>
            <person name="Culley K.M."/>
            <person name="Dhami P."/>
            <person name="Davies J."/>
            <person name="Dunn M."/>
            <person name="Earthrowl M.E."/>
            <person name="Ellington A.E."/>
            <person name="Evans K.A."/>
            <person name="Faulkner L."/>
            <person name="Francis M.D."/>
            <person name="Frankish A."/>
            <person name="Frankland J."/>
            <person name="French L."/>
            <person name="Garner P."/>
            <person name="Garnett J."/>
            <person name="Ghori M.J."/>
            <person name="Gilby L.M."/>
            <person name="Gillson C.J."/>
            <person name="Glithero R.J."/>
            <person name="Grafham D.V."/>
            <person name="Grant M."/>
            <person name="Gribble S."/>
            <person name="Griffiths C."/>
            <person name="Griffiths M.N.D."/>
            <person name="Hall R."/>
            <person name="Halls K.S."/>
            <person name="Hammond S."/>
            <person name="Harley J.L."/>
            <person name="Hart E.A."/>
            <person name="Heath P.D."/>
            <person name="Heathcott R."/>
            <person name="Holmes S.J."/>
            <person name="Howden P.J."/>
            <person name="Howe K.L."/>
            <person name="Howell G.R."/>
            <person name="Huckle E."/>
            <person name="Humphray S.J."/>
            <person name="Humphries M.D."/>
            <person name="Hunt A.R."/>
            <person name="Johnson C.M."/>
            <person name="Joy A.A."/>
            <person name="Kay M."/>
            <person name="Keenan S.J."/>
            <person name="Kimberley A.M."/>
            <person name="King A."/>
            <person name="Laird G.K."/>
            <person name="Langford C."/>
            <person name="Lawlor S."/>
            <person name="Leongamornlert D.A."/>
            <person name="Leversha M."/>
            <person name="Lloyd C.R."/>
            <person name="Lloyd D.M."/>
            <person name="Loveland J.E."/>
            <person name="Lovell J."/>
            <person name="Martin S."/>
            <person name="Mashreghi-Mohammadi M."/>
            <person name="Maslen G.L."/>
            <person name="Matthews L."/>
            <person name="McCann O.T."/>
            <person name="McLaren S.J."/>
            <person name="McLay K."/>
            <person name="McMurray A."/>
            <person name="Moore M.J.F."/>
            <person name="Mullikin J.C."/>
            <person name="Niblett D."/>
            <person name="Nickerson T."/>
            <person name="Novik K.L."/>
            <person name="Oliver K."/>
            <person name="Overton-Larty E.K."/>
            <person name="Parker A."/>
            <person name="Patel R."/>
            <person name="Pearce A.V."/>
            <person name="Peck A.I."/>
            <person name="Phillimore B.J.C.T."/>
            <person name="Phillips S."/>
            <person name="Plumb R.W."/>
            <person name="Porter K.M."/>
            <person name="Ramsey Y."/>
            <person name="Ranby S.A."/>
            <person name="Rice C.M."/>
            <person name="Ross M.T."/>
            <person name="Searle S.M."/>
            <person name="Sehra H.K."/>
            <person name="Sheridan E."/>
            <person name="Skuce C.D."/>
            <person name="Smith S."/>
            <person name="Smith M."/>
            <person name="Spraggon L."/>
            <person name="Squares S.L."/>
            <person name="Steward C.A."/>
            <person name="Sycamore N."/>
            <person name="Tamlyn-Hall G."/>
            <person name="Tester J."/>
            <person name="Theaker A.J."/>
            <person name="Thomas D.W."/>
            <person name="Thorpe A."/>
            <person name="Tracey A."/>
            <person name="Tromans A."/>
            <person name="Tubby B."/>
            <person name="Wall M."/>
            <person name="Wallis J.M."/>
            <person name="West A.P."/>
            <person name="White S.S."/>
            <person name="Whitehead S.L."/>
            <person name="Whittaker H."/>
            <person name="Wild A."/>
            <person name="Willey D.J."/>
            <person name="Wilmer T.E."/>
            <person name="Wood J.M."/>
            <person name="Wray P.W."/>
            <person name="Wyatt J.C."/>
            <person name="Young L."/>
            <person name="Younger R.M."/>
            <person name="Bentley D.R."/>
            <person name="Coulson A."/>
            <person name="Durbin R.M."/>
            <person name="Hubbard T."/>
            <person name="Sulston J.E."/>
            <person name="Dunham I."/>
            <person name="Rogers J."/>
            <person name="Beck S."/>
        </authorList>
    </citation>
    <scope>NUCLEOTIDE SEQUENCE [LARGE SCALE GENOMIC DNA] (ISOFORMS 1; 2 AND 3)</scope>
</reference>
<reference key="2">
    <citation type="journal article" date="2004" name="Genome Res.">
        <title>The status, quality, and expansion of the NIH full-length cDNA project: the Mammalian Gene Collection (MGC).</title>
        <authorList>
            <consortium name="The MGC Project Team"/>
        </authorList>
    </citation>
    <scope>NUCLEOTIDE SEQUENCE [LARGE SCALE MRNA] (ISOFORM 2)</scope>
    <source>
        <tissue>Cerebellum</tissue>
    </source>
</reference>
<reference key="3">
    <citation type="journal article" date="2004" name="Nat. Genet.">
        <title>Complete sequencing and characterization of 21,243 full-length human cDNAs.</title>
        <authorList>
            <person name="Ota T."/>
            <person name="Suzuki Y."/>
            <person name="Nishikawa T."/>
            <person name="Otsuki T."/>
            <person name="Sugiyama T."/>
            <person name="Irie R."/>
            <person name="Wakamatsu A."/>
            <person name="Hayashi K."/>
            <person name="Sato H."/>
            <person name="Nagai K."/>
            <person name="Kimura K."/>
            <person name="Makita H."/>
            <person name="Sekine M."/>
            <person name="Obayashi M."/>
            <person name="Nishi T."/>
            <person name="Shibahara T."/>
            <person name="Tanaka T."/>
            <person name="Ishii S."/>
            <person name="Yamamoto J."/>
            <person name="Saito K."/>
            <person name="Kawai Y."/>
            <person name="Isono Y."/>
            <person name="Nakamura Y."/>
            <person name="Nagahari K."/>
            <person name="Murakami K."/>
            <person name="Yasuda T."/>
            <person name="Iwayanagi T."/>
            <person name="Wagatsuma M."/>
            <person name="Shiratori A."/>
            <person name="Sudo H."/>
            <person name="Hosoiri T."/>
            <person name="Kaku Y."/>
            <person name="Kodaira H."/>
            <person name="Kondo H."/>
            <person name="Sugawara M."/>
            <person name="Takahashi M."/>
            <person name="Kanda K."/>
            <person name="Yokoi T."/>
            <person name="Furuya T."/>
            <person name="Kikkawa E."/>
            <person name="Omura Y."/>
            <person name="Abe K."/>
            <person name="Kamihara K."/>
            <person name="Katsuta N."/>
            <person name="Sato K."/>
            <person name="Tanikawa M."/>
            <person name="Yamazaki M."/>
            <person name="Ninomiya K."/>
            <person name="Ishibashi T."/>
            <person name="Yamashita H."/>
            <person name="Murakawa K."/>
            <person name="Fujimori K."/>
            <person name="Tanai H."/>
            <person name="Kimata M."/>
            <person name="Watanabe M."/>
            <person name="Hiraoka S."/>
            <person name="Chiba Y."/>
            <person name="Ishida S."/>
            <person name="Ono Y."/>
            <person name="Takiguchi S."/>
            <person name="Watanabe S."/>
            <person name="Yosida M."/>
            <person name="Hotuta T."/>
            <person name="Kusano J."/>
            <person name="Kanehori K."/>
            <person name="Takahashi-Fujii A."/>
            <person name="Hara H."/>
            <person name="Tanase T.-O."/>
            <person name="Nomura Y."/>
            <person name="Togiya S."/>
            <person name="Komai F."/>
            <person name="Hara R."/>
            <person name="Takeuchi K."/>
            <person name="Arita M."/>
            <person name="Imose N."/>
            <person name="Musashino K."/>
            <person name="Yuuki H."/>
            <person name="Oshima A."/>
            <person name="Sasaki N."/>
            <person name="Aotsuka S."/>
            <person name="Yoshikawa Y."/>
            <person name="Matsunawa H."/>
            <person name="Ichihara T."/>
            <person name="Shiohata N."/>
            <person name="Sano S."/>
            <person name="Moriya S."/>
            <person name="Momiyama H."/>
            <person name="Satoh N."/>
            <person name="Takami S."/>
            <person name="Terashima Y."/>
            <person name="Suzuki O."/>
            <person name="Nakagawa S."/>
            <person name="Senoh A."/>
            <person name="Mizoguchi H."/>
            <person name="Goto Y."/>
            <person name="Shimizu F."/>
            <person name="Wakebe H."/>
            <person name="Hishigaki H."/>
            <person name="Watanabe T."/>
            <person name="Sugiyama A."/>
            <person name="Takemoto M."/>
            <person name="Kawakami B."/>
            <person name="Yamazaki M."/>
            <person name="Watanabe K."/>
            <person name="Kumagai A."/>
            <person name="Itakura S."/>
            <person name="Fukuzumi Y."/>
            <person name="Fujimori Y."/>
            <person name="Komiyama M."/>
            <person name="Tashiro H."/>
            <person name="Tanigami A."/>
            <person name="Fujiwara T."/>
            <person name="Ono T."/>
            <person name="Yamada K."/>
            <person name="Fujii Y."/>
            <person name="Ozaki K."/>
            <person name="Hirao M."/>
            <person name="Ohmori Y."/>
            <person name="Kawabata A."/>
            <person name="Hikiji T."/>
            <person name="Kobatake N."/>
            <person name="Inagaki H."/>
            <person name="Ikema Y."/>
            <person name="Okamoto S."/>
            <person name="Okitani R."/>
            <person name="Kawakami T."/>
            <person name="Noguchi S."/>
            <person name="Itoh T."/>
            <person name="Shigeta K."/>
            <person name="Senba T."/>
            <person name="Matsumura K."/>
            <person name="Nakajima Y."/>
            <person name="Mizuno T."/>
            <person name="Morinaga M."/>
            <person name="Sasaki M."/>
            <person name="Togashi T."/>
            <person name="Oyama M."/>
            <person name="Hata H."/>
            <person name="Watanabe M."/>
            <person name="Komatsu T."/>
            <person name="Mizushima-Sugano J."/>
            <person name="Satoh T."/>
            <person name="Shirai Y."/>
            <person name="Takahashi Y."/>
            <person name="Nakagawa K."/>
            <person name="Okumura K."/>
            <person name="Nagase T."/>
            <person name="Nomura N."/>
            <person name="Kikuchi H."/>
            <person name="Masuho Y."/>
            <person name="Yamashita R."/>
            <person name="Nakai K."/>
            <person name="Yada T."/>
            <person name="Nakamura Y."/>
            <person name="Ohara O."/>
            <person name="Isogai T."/>
            <person name="Sugano S."/>
        </authorList>
    </citation>
    <scope>NUCLEOTIDE SEQUENCE [LARGE SCALE MRNA] OF 373-1151 (ISOFORM 1)</scope>
    <scope>NUCLEOTIDE SEQUENCE [LARGE SCALE MRNA] OF 670-1151 (ISOFORM 2)</scope>
    <source>
        <tissue>Brain</tissue>
    </source>
</reference>
<reference key="4">
    <citation type="journal article" date="2006" name="Cell">
        <title>Global, in vivo, and site-specific phosphorylation dynamics in signaling networks.</title>
        <authorList>
            <person name="Olsen J.V."/>
            <person name="Blagoev B."/>
            <person name="Gnad F."/>
            <person name="Macek B."/>
            <person name="Kumar C."/>
            <person name="Mortensen P."/>
            <person name="Mann M."/>
        </authorList>
    </citation>
    <scope>PHOSPHORYLATION [LARGE SCALE ANALYSIS] AT THR-762</scope>
    <scope>IDENTIFICATION BY MASS SPECTROMETRY [LARGE SCALE ANALYSIS]</scope>
    <source>
        <tissue>Cervix carcinoma</tissue>
    </source>
</reference>
<reference key="5">
    <citation type="journal article" date="2008" name="J. Proteome Res.">
        <title>Phosphoproteome of resting human platelets.</title>
        <authorList>
            <person name="Zahedi R.P."/>
            <person name="Lewandrowski U."/>
            <person name="Wiesner J."/>
            <person name="Wortelkamp S."/>
            <person name="Moebius J."/>
            <person name="Schuetz C."/>
            <person name="Walter U."/>
            <person name="Gambaryan S."/>
            <person name="Sickmann A."/>
        </authorList>
    </citation>
    <scope>PHOSPHORYLATION [LARGE SCALE ANALYSIS] AT SER-759</scope>
    <scope>IDENTIFICATION BY MASS SPECTROMETRY [LARGE SCALE ANALYSIS]</scope>
    <source>
        <tissue>Platelet</tissue>
    </source>
</reference>
<reference key="6">
    <citation type="journal article" date="2008" name="Proc. Natl. Acad. Sci. U.S.A.">
        <title>A quantitative atlas of mitotic phosphorylation.</title>
        <authorList>
            <person name="Dephoure N."/>
            <person name="Zhou C."/>
            <person name="Villen J."/>
            <person name="Beausoleil S.A."/>
            <person name="Bakalarski C.E."/>
            <person name="Elledge S.J."/>
            <person name="Gygi S.P."/>
        </authorList>
    </citation>
    <scope>PHOSPHORYLATION [LARGE SCALE ANALYSIS] AT SER-785</scope>
    <scope>IDENTIFICATION BY MASS SPECTROMETRY [LARGE SCALE ANALYSIS]</scope>
    <source>
        <tissue>Cervix carcinoma</tissue>
    </source>
</reference>
<reference key="7">
    <citation type="journal article" date="2009" name="Sci. Signal.">
        <title>Quantitative phosphoproteomic analysis of T cell receptor signaling reveals system-wide modulation of protein-protein interactions.</title>
        <authorList>
            <person name="Mayya V."/>
            <person name="Lundgren D.H."/>
            <person name="Hwang S.-I."/>
            <person name="Rezaul K."/>
            <person name="Wu L."/>
            <person name="Eng J.K."/>
            <person name="Rodionov V."/>
            <person name="Han D.K."/>
        </authorList>
    </citation>
    <scope>IDENTIFICATION BY MASS SPECTROMETRY [LARGE SCALE ANALYSIS]</scope>
    <source>
        <tissue>Leukemic T-cell</tissue>
    </source>
</reference>
<reference key="8">
    <citation type="journal article" date="2013" name="J. Proteome Res.">
        <title>Toward a comprehensive characterization of a human cancer cell phosphoproteome.</title>
        <authorList>
            <person name="Zhou H."/>
            <person name="Di Palma S."/>
            <person name="Preisinger C."/>
            <person name="Peng M."/>
            <person name="Polat A.N."/>
            <person name="Heck A.J."/>
            <person name="Mohammed S."/>
        </authorList>
    </citation>
    <scope>PHOSPHORYLATION [LARGE SCALE ANALYSIS] AT SER-692; SER-759 AND SER-1131</scope>
    <scope>IDENTIFICATION BY MASS SPECTROMETRY [LARGE SCALE ANALYSIS]</scope>
    <source>
        <tissue>Cervix carcinoma</tissue>
        <tissue>Erythroleukemia</tissue>
    </source>
</reference>
<reference key="9">
    <citation type="journal article" date="2014" name="J. Proteomics">
        <title>An enzyme assisted RP-RPLC approach for in-depth analysis of human liver phosphoproteome.</title>
        <authorList>
            <person name="Bian Y."/>
            <person name="Song C."/>
            <person name="Cheng K."/>
            <person name="Dong M."/>
            <person name="Wang F."/>
            <person name="Huang J."/>
            <person name="Sun D."/>
            <person name="Wang L."/>
            <person name="Ye M."/>
            <person name="Zou H."/>
        </authorList>
    </citation>
    <scope>PHOSPHORYLATION [LARGE SCALE ANALYSIS] AT SER-759 AND THR-1039</scope>
    <scope>IDENTIFICATION BY MASS SPECTROMETRY [LARGE SCALE ANALYSIS]</scope>
    <source>
        <tissue>Liver</tissue>
    </source>
</reference>
<comment type="function">
    <text evidence="1">Plays a regulatory role in calcium-dependent exocytosis and neurotransmitter release. Inhibits membrane fusion between transport vesicles and the plasma membrane. May modulate the assembly of trans-SNARE complexes between transport vesicles and the plasma membrane. Inhibits translocation of GLUT4 from intracellular vesicles to the plasma membrane. Competes with STXBP1 for STX1 binding (By similarity).</text>
</comment>
<comment type="subunit">
    <text evidence="1">Interacts with STX1A and STX1B via its v-SNARE homology domain. Part of a complex that contains STX1, STXBP5, SNAP25 and SYT1. Part of a complex that contains STXBP5, STX4A and SNAP23 (By similarity).</text>
</comment>
<comment type="subcellular location">
    <subcellularLocation>
        <location evidence="1">Cytoplasm</location>
    </subcellularLocation>
    <subcellularLocation>
        <location evidence="1">Cell membrane</location>
        <topology evidence="1">Peripheral membrane protein</topology>
    </subcellularLocation>
    <subcellularLocation>
        <location evidence="1">Cytoplasmic vesicle membrane</location>
        <topology evidence="1">Peripheral membrane protein</topology>
    </subcellularLocation>
    <subcellularLocation>
        <location evidence="1">Cytoplasmic vesicle</location>
        <location evidence="1">Secretory vesicle</location>
        <location evidence="1">Synaptic vesicle</location>
    </subcellularLocation>
    <subcellularLocation>
        <location evidence="1">Synapse</location>
    </subcellularLocation>
    <text evidence="1">Cytoplasmic, and associated with vesicular membranes and the plasma membrane. Detected at synapses and on synaptic vesicles (By similarity).</text>
</comment>
<comment type="alternative products">
    <event type="alternative splicing"/>
    <isoform>
        <id>Q5T5C0-1</id>
        <name>1</name>
        <sequence type="displayed"/>
    </isoform>
    <isoform>
        <id>Q5T5C0-2</id>
        <name>2</name>
        <sequence type="described" ref="VSP_016205"/>
    </isoform>
    <isoform>
        <id>Q5T5C0-3</id>
        <name>3</name>
        <sequence type="described" ref="VSP_016204"/>
    </isoform>
</comment>
<comment type="similarity">
    <text evidence="8">Belongs to the WD repeat L(2)GL family.</text>
</comment>
<comment type="sequence caution" evidence="8">
    <conflict type="erroneous initiation">
        <sequence resource="EMBL-CDS" id="BAC03475"/>
    </conflict>
</comment>
<accession>Q5T5C0</accession>
<accession>Q14DF3</accession>
<accession>Q5T5C1</accession>
<accession>Q5T5C2</accession>
<accession>Q8NBG8</accession>
<accession>Q96NG9</accession>
<dbReference type="EMBL" id="AL356415">
    <property type="status" value="NOT_ANNOTATED_CDS"/>
    <property type="molecule type" value="Genomic_DNA"/>
</dbReference>
<dbReference type="EMBL" id="AL355365">
    <property type="status" value="NOT_ANNOTATED_CDS"/>
    <property type="molecule type" value="Genomic_DNA"/>
</dbReference>
<dbReference type="EMBL" id="AL590709">
    <property type="status" value="NOT_ANNOTATED_CDS"/>
    <property type="molecule type" value="Genomic_DNA"/>
</dbReference>
<dbReference type="EMBL" id="BC113382">
    <property type="protein sequence ID" value="AAI13383.1"/>
    <property type="molecule type" value="mRNA"/>
</dbReference>
<dbReference type="EMBL" id="AK055484">
    <property type="protein sequence ID" value="BAB70930.1"/>
    <property type="molecule type" value="mRNA"/>
</dbReference>
<dbReference type="EMBL" id="AK090549">
    <property type="protein sequence ID" value="BAC03475.1"/>
    <property type="status" value="ALT_INIT"/>
    <property type="molecule type" value="mRNA"/>
</dbReference>
<dbReference type="CCDS" id="CCDS47499.1">
    <molecule id="Q5T5C0-1"/>
</dbReference>
<dbReference type="CCDS" id="CCDS5211.1">
    <molecule id="Q5T5C0-2"/>
</dbReference>
<dbReference type="RefSeq" id="NP_001121187.1">
    <molecule id="Q5T5C0-1"/>
    <property type="nucleotide sequence ID" value="NM_001127715.4"/>
</dbReference>
<dbReference type="RefSeq" id="NP_640337.3">
    <molecule id="Q5T5C0-2"/>
    <property type="nucleotide sequence ID" value="NM_139244.4"/>
</dbReference>
<dbReference type="SMR" id="Q5T5C0"/>
<dbReference type="BioGRID" id="126417">
    <property type="interactions" value="38"/>
</dbReference>
<dbReference type="FunCoup" id="Q5T5C0">
    <property type="interactions" value="2490"/>
</dbReference>
<dbReference type="IntAct" id="Q5T5C0">
    <property type="interactions" value="23"/>
</dbReference>
<dbReference type="STRING" id="9606.ENSP00000321826"/>
<dbReference type="GlyGen" id="Q5T5C0">
    <property type="glycosylation" value="2 sites, 1 O-linked glycan (1 site)"/>
</dbReference>
<dbReference type="iPTMnet" id="Q5T5C0"/>
<dbReference type="PhosphoSitePlus" id="Q5T5C0"/>
<dbReference type="SwissPalm" id="Q5T5C0"/>
<dbReference type="BioMuta" id="STXBP5"/>
<dbReference type="DMDM" id="74762236"/>
<dbReference type="jPOST" id="Q5T5C0"/>
<dbReference type="MassIVE" id="Q5T5C0"/>
<dbReference type="PaxDb" id="9606-ENSP00000321826"/>
<dbReference type="PeptideAtlas" id="Q5T5C0"/>
<dbReference type="ProteomicsDB" id="64509">
    <molecule id="Q5T5C0-1"/>
</dbReference>
<dbReference type="ProteomicsDB" id="64510">
    <molecule id="Q5T5C0-2"/>
</dbReference>
<dbReference type="ProteomicsDB" id="64511">
    <molecule id="Q5T5C0-3"/>
</dbReference>
<dbReference type="Pumba" id="Q5T5C0"/>
<dbReference type="Antibodypedia" id="33249">
    <property type="antibodies" value="49 antibodies from 15 providers"/>
</dbReference>
<dbReference type="DNASU" id="134957"/>
<dbReference type="Ensembl" id="ENST00000321680.11">
    <molecule id="Q5T5C0-1"/>
    <property type="protein sequence ID" value="ENSP00000321826.6"/>
    <property type="gene ID" value="ENSG00000164506.16"/>
</dbReference>
<dbReference type="Ensembl" id="ENST00000367480.7">
    <molecule id="Q5T5C0-3"/>
    <property type="protein sequence ID" value="ENSP00000356450.3"/>
    <property type="gene ID" value="ENSG00000164506.16"/>
</dbReference>
<dbReference type="Ensembl" id="ENST00000367481.7">
    <molecule id="Q5T5C0-2"/>
    <property type="protein sequence ID" value="ENSP00000356451.3"/>
    <property type="gene ID" value="ENSG00000164506.16"/>
</dbReference>
<dbReference type="Ensembl" id="ENST00000706849.1">
    <molecule id="Q5T5C0-2"/>
    <property type="protein sequence ID" value="ENSP00000516590.1"/>
    <property type="gene ID" value="ENSG00000164506.16"/>
</dbReference>
<dbReference type="Ensembl" id="ENST00000706850.1">
    <molecule id="Q5T5C0-2"/>
    <property type="protein sequence ID" value="ENSP00000516591.1"/>
    <property type="gene ID" value="ENSG00000164506.16"/>
</dbReference>
<dbReference type="GeneID" id="134957"/>
<dbReference type="KEGG" id="hsa:134957"/>
<dbReference type="MANE-Select" id="ENST00000321680.11">
    <property type="protein sequence ID" value="ENSP00000321826.6"/>
    <property type="RefSeq nucleotide sequence ID" value="NM_001127715.4"/>
    <property type="RefSeq protein sequence ID" value="NP_001121187.1"/>
</dbReference>
<dbReference type="UCSC" id="uc003qlz.4">
    <molecule id="Q5T5C0-1"/>
    <property type="organism name" value="human"/>
</dbReference>
<dbReference type="AGR" id="HGNC:19665"/>
<dbReference type="CTD" id="134957"/>
<dbReference type="DisGeNET" id="134957"/>
<dbReference type="GeneCards" id="STXBP5"/>
<dbReference type="HGNC" id="HGNC:19665">
    <property type="gene designation" value="STXBP5"/>
</dbReference>
<dbReference type="HPA" id="ENSG00000164506">
    <property type="expression patterns" value="Tissue enhanced (parathyroid)"/>
</dbReference>
<dbReference type="MalaCards" id="STXBP5"/>
<dbReference type="MIM" id="604586">
    <property type="type" value="gene"/>
</dbReference>
<dbReference type="neXtProt" id="NX_Q5T5C0"/>
<dbReference type="OpenTargets" id="ENSG00000164506"/>
<dbReference type="PharmGKB" id="PA134954258"/>
<dbReference type="VEuPathDB" id="HostDB:ENSG00000164506"/>
<dbReference type="eggNOG" id="KOG1983">
    <property type="taxonomic scope" value="Eukaryota"/>
</dbReference>
<dbReference type="GeneTree" id="ENSGT00950000182906"/>
<dbReference type="HOGENOM" id="CLU_002808_0_0_1"/>
<dbReference type="InParanoid" id="Q5T5C0"/>
<dbReference type="OMA" id="IVWKFFD"/>
<dbReference type="OrthoDB" id="19944at2759"/>
<dbReference type="PAN-GO" id="Q5T5C0">
    <property type="GO annotations" value="8 GO annotations based on evolutionary models"/>
</dbReference>
<dbReference type="PhylomeDB" id="Q5T5C0"/>
<dbReference type="TreeFam" id="TF314585"/>
<dbReference type="PathwayCommons" id="Q5T5C0"/>
<dbReference type="SignaLink" id="Q5T5C0"/>
<dbReference type="BioGRID-ORCS" id="134957">
    <property type="hits" value="14 hits in 1153 CRISPR screens"/>
</dbReference>
<dbReference type="CD-CODE" id="FB4E32DD">
    <property type="entry name" value="Presynaptic clusters and postsynaptic densities"/>
</dbReference>
<dbReference type="ChiTaRS" id="STXBP5">
    <property type="organism name" value="human"/>
</dbReference>
<dbReference type="GeneWiki" id="STXBP5"/>
<dbReference type="GenomeRNAi" id="134957"/>
<dbReference type="Pharos" id="Q5T5C0">
    <property type="development level" value="Tbio"/>
</dbReference>
<dbReference type="PRO" id="PR:Q5T5C0"/>
<dbReference type="Proteomes" id="UP000005640">
    <property type="component" value="Chromosome 6"/>
</dbReference>
<dbReference type="RNAct" id="Q5T5C0">
    <property type="molecule type" value="protein"/>
</dbReference>
<dbReference type="Bgee" id="ENSG00000164506">
    <property type="expression patterns" value="Expressed in adrenal tissue and 170 other cell types or tissues"/>
</dbReference>
<dbReference type="ExpressionAtlas" id="Q5T5C0">
    <property type="expression patterns" value="baseline and differential"/>
</dbReference>
<dbReference type="GO" id="GO:0005892">
    <property type="term" value="C:acetylcholine-gated channel complex"/>
    <property type="evidence" value="ECO:0000250"/>
    <property type="project" value="BHF-UCL"/>
</dbReference>
<dbReference type="GO" id="GO:0005737">
    <property type="term" value="C:cytoplasm"/>
    <property type="evidence" value="ECO:0000318"/>
    <property type="project" value="GO_Central"/>
</dbReference>
<dbReference type="GO" id="GO:0005829">
    <property type="term" value="C:cytosol"/>
    <property type="evidence" value="ECO:0000314"/>
    <property type="project" value="HPA"/>
</dbReference>
<dbReference type="GO" id="GO:0098674">
    <property type="term" value="C:extrinsic component of neuronal dense core vesicle membrane"/>
    <property type="evidence" value="ECO:0007669"/>
    <property type="project" value="Ensembl"/>
</dbReference>
<dbReference type="GO" id="GO:0098686">
    <property type="term" value="C:hippocampal mossy fiber to CA3 synapse"/>
    <property type="evidence" value="ECO:0007669"/>
    <property type="project" value="Ensembl"/>
</dbReference>
<dbReference type="GO" id="GO:0005886">
    <property type="term" value="C:plasma membrane"/>
    <property type="evidence" value="ECO:0000318"/>
    <property type="project" value="GO_Central"/>
</dbReference>
<dbReference type="GO" id="GO:0031201">
    <property type="term" value="C:SNARE complex"/>
    <property type="evidence" value="ECO:0000318"/>
    <property type="project" value="GO_Central"/>
</dbReference>
<dbReference type="GO" id="GO:0008021">
    <property type="term" value="C:synaptic vesicle"/>
    <property type="evidence" value="ECO:0007669"/>
    <property type="project" value="UniProtKB-SubCell"/>
</dbReference>
<dbReference type="GO" id="GO:0005096">
    <property type="term" value="F:GTPase activator activity"/>
    <property type="evidence" value="ECO:0000318"/>
    <property type="project" value="GO_Central"/>
</dbReference>
<dbReference type="GO" id="GO:0045159">
    <property type="term" value="F:myosin II binding"/>
    <property type="evidence" value="ECO:0000318"/>
    <property type="project" value="GO_Central"/>
</dbReference>
<dbReference type="GO" id="GO:0019905">
    <property type="term" value="F:syntaxin binding"/>
    <property type="evidence" value="ECO:0000318"/>
    <property type="project" value="GO_Central"/>
</dbReference>
<dbReference type="GO" id="GO:0017075">
    <property type="term" value="F:syntaxin-1 binding"/>
    <property type="evidence" value="ECO:0000250"/>
    <property type="project" value="BHF-UCL"/>
</dbReference>
<dbReference type="GO" id="GO:0006887">
    <property type="term" value="P:exocytosis"/>
    <property type="evidence" value="ECO:0000318"/>
    <property type="project" value="GO_Central"/>
</dbReference>
<dbReference type="GO" id="GO:0006893">
    <property type="term" value="P:Golgi to plasma membrane transport"/>
    <property type="evidence" value="ECO:0000318"/>
    <property type="project" value="GO_Central"/>
</dbReference>
<dbReference type="GO" id="GO:0045921">
    <property type="term" value="P:positive regulation of exocytosis"/>
    <property type="evidence" value="ECO:0000250"/>
    <property type="project" value="BHF-UCL"/>
</dbReference>
<dbReference type="GO" id="GO:0015031">
    <property type="term" value="P:protein transport"/>
    <property type="evidence" value="ECO:0007669"/>
    <property type="project" value="UniProtKB-KW"/>
</dbReference>
<dbReference type="GO" id="GO:0017157">
    <property type="term" value="P:regulation of exocytosis"/>
    <property type="evidence" value="ECO:0000304"/>
    <property type="project" value="ParkinsonsUK-UCL"/>
</dbReference>
<dbReference type="GO" id="GO:2000300">
    <property type="term" value="P:regulation of synaptic vesicle exocytosis"/>
    <property type="evidence" value="ECO:0007669"/>
    <property type="project" value="Ensembl"/>
</dbReference>
<dbReference type="GO" id="GO:0010807">
    <property type="term" value="P:regulation of synaptic vesicle priming"/>
    <property type="evidence" value="ECO:0007669"/>
    <property type="project" value="Ensembl"/>
</dbReference>
<dbReference type="CDD" id="cd15893">
    <property type="entry name" value="R-SNARE_STXBP5"/>
    <property type="match status" value="1"/>
</dbReference>
<dbReference type="FunFam" id="2.130.10.10:FF:003138">
    <property type="entry name" value="Syntaxin binding protein 5 like"/>
    <property type="match status" value="1"/>
</dbReference>
<dbReference type="FunFam" id="1.20.5.110:FF:000001">
    <property type="entry name" value="syntaxin-binding protein 5 isoform X1"/>
    <property type="match status" value="1"/>
</dbReference>
<dbReference type="FunFam" id="2.130.10.10:FF:000186">
    <property type="entry name" value="syntaxin-binding protein 5-like isoform X2"/>
    <property type="match status" value="1"/>
</dbReference>
<dbReference type="Gene3D" id="1.20.5.110">
    <property type="match status" value="1"/>
</dbReference>
<dbReference type="Gene3D" id="2.130.10.10">
    <property type="entry name" value="YVTN repeat-like/Quinoprotein amine dehydrogenase"/>
    <property type="match status" value="2"/>
</dbReference>
<dbReference type="InterPro" id="IPR000664">
    <property type="entry name" value="Lethal2_giant"/>
</dbReference>
<dbReference type="InterPro" id="IPR013905">
    <property type="entry name" value="Lgl_C_dom"/>
</dbReference>
<dbReference type="InterPro" id="IPR013577">
    <property type="entry name" value="LLGL2"/>
</dbReference>
<dbReference type="InterPro" id="IPR042855">
    <property type="entry name" value="V_SNARE_CC"/>
</dbReference>
<dbReference type="InterPro" id="IPR015943">
    <property type="entry name" value="WD40/YVTN_repeat-like_dom_sf"/>
</dbReference>
<dbReference type="InterPro" id="IPR036322">
    <property type="entry name" value="WD40_repeat_dom_sf"/>
</dbReference>
<dbReference type="InterPro" id="IPR001680">
    <property type="entry name" value="WD40_rpt"/>
</dbReference>
<dbReference type="PANTHER" id="PTHR10241">
    <property type="entry name" value="LETHAL 2 GIANT LARVAE PROTEIN"/>
    <property type="match status" value="1"/>
</dbReference>
<dbReference type="PANTHER" id="PTHR10241:SF22">
    <property type="entry name" value="SYNTAXIN-BINDING PROTEIN 5"/>
    <property type="match status" value="1"/>
</dbReference>
<dbReference type="Pfam" id="PF08596">
    <property type="entry name" value="Lgl_C"/>
    <property type="match status" value="1"/>
</dbReference>
<dbReference type="Pfam" id="PF08366">
    <property type="entry name" value="LLGL"/>
    <property type="match status" value="1"/>
</dbReference>
<dbReference type="Pfam" id="PF00400">
    <property type="entry name" value="WD40"/>
    <property type="match status" value="1"/>
</dbReference>
<dbReference type="PRINTS" id="PR00962">
    <property type="entry name" value="LETHAL2GIANT"/>
</dbReference>
<dbReference type="SMART" id="SM00320">
    <property type="entry name" value="WD40"/>
    <property type="match status" value="7"/>
</dbReference>
<dbReference type="SUPFAM" id="SSF58038">
    <property type="entry name" value="SNARE fusion complex"/>
    <property type="match status" value="1"/>
</dbReference>
<dbReference type="SUPFAM" id="SSF50978">
    <property type="entry name" value="WD40 repeat-like"/>
    <property type="match status" value="2"/>
</dbReference>
<dbReference type="PROSITE" id="PS50892">
    <property type="entry name" value="V_SNARE"/>
    <property type="match status" value="1"/>
</dbReference>
<dbReference type="PROSITE" id="PS00678">
    <property type="entry name" value="WD_REPEATS_1"/>
    <property type="match status" value="2"/>
</dbReference>
<dbReference type="PROSITE" id="PS50082">
    <property type="entry name" value="WD_REPEATS_2"/>
    <property type="match status" value="1"/>
</dbReference>
<dbReference type="PROSITE" id="PS50294">
    <property type="entry name" value="WD_REPEATS_REGION"/>
    <property type="match status" value="1"/>
</dbReference>
<gene>
    <name type="primary">STXBP5</name>
    <name type="synonym">LLGL3</name>
</gene>
<organism>
    <name type="scientific">Homo sapiens</name>
    <name type="common">Human</name>
    <dbReference type="NCBI Taxonomy" id="9606"/>
    <lineage>
        <taxon>Eukaryota</taxon>
        <taxon>Metazoa</taxon>
        <taxon>Chordata</taxon>
        <taxon>Craniata</taxon>
        <taxon>Vertebrata</taxon>
        <taxon>Euteleostomi</taxon>
        <taxon>Mammalia</taxon>
        <taxon>Eutheria</taxon>
        <taxon>Euarchontoglires</taxon>
        <taxon>Primates</taxon>
        <taxon>Haplorrhini</taxon>
        <taxon>Catarrhini</taxon>
        <taxon>Hominidae</taxon>
        <taxon>Homo</taxon>
    </lineage>
</organism>
<sequence length="1151" mass="127573">MRKFNIRKVLDGLTAGSSSASQQQQQQHPPGNREPEIQETLQSEHFQLCKTVRHGFPYQPSALAFDPVQKILAVGTQTGALRLFGRPGVECYCQHDSGAAVIQLQFLINEGALVSALADDTLHLWNLRQKRPAILHSLKFCRERVTFCHLPFQSKWLYVGTERGNIHIVNVESFTLSGYVIMWNKAIELSSKSHPGPVVHISDNPMDEGKLLIGFESGTVVLWDLKSKKADYRYTYDEAIHSVAWHHEGKQFICSHSDGTLTIWNVRSPAKPVQTITPHGKQLKDGKKPEPCKPILKVEFKTTRSGEPFIILSGGLSYDTVGRRPCLTVMHGKSTAVLEMDYSIVDFLTLCETPYPNDFQEPYAVVVLLEKDLVLIDLAQNGYPIFENPYPLSIHESPVTCCEYFADCPVDLIPALYSVGARQKRQGYSKKEWPINGGNWGLGAQSYPEIIITGHADGSVKFWDASAITLQVLYKLKTSKVFEKSRNKDDRPNTDIVDEDPYAIQIISWCPESRMLCIAGVSAHVIIYRFSKQEVITEVIPMLEVRLLYEINDVETPEGEQPPPLPTPVGGSNPQPIPPQSHPSTSSSSSDGLRDNVPCLKVKNSPLKQSPGYQTELVIQLVWVGGEPPQQITSLAVNSSYGLVVFGNCNGIAMVDYLQKAVLLNLGTIELYGSNDPYRREPRSPRKSRQPSGAGLCDISEGTVVPEDRCKSPTSGSSSPHNSDDEQKMNNFIEKVKTKSRKFSKMVANDIAKMSRKLSLPTDLKPDLDVKDNSFSRSRSSSVTSIDKESREAISALHFCETFTRKTDSSPSPCLWVGTTLGTVLVIALNLPPGGEQRLLQPVIVSPSGTILRLKGAILRMAFLDTTGCLIPPAYEPWREHNVPEEKDEKEKLKKRRPVSVSPSSSQEISENQYAVICSEKQAKVISLPTQNCAYKQNITETSFVLRGDIVALSNSICLACFCANGHIMTFSLPSLRPLLDVYYLPLTNMRIARTFCFTNNGQALYLVSPTEIQRLTYSQETCENLQEMLGELFTPVETPEAPNRGFFKGLFGGGAQSLDREELFGESSSGKASRSLAQHIPGPGGIEGVKGAASGVVGELARARLALDERGQKLGDLEERTAAMLSSAESFSKHAHEIMLKYKDKKWYQF</sequence>
<name>STXB5_HUMAN</name>
<keyword id="KW-0025">Alternative splicing</keyword>
<keyword id="KW-1003">Cell membrane</keyword>
<keyword id="KW-0175">Coiled coil</keyword>
<keyword id="KW-0963">Cytoplasm</keyword>
<keyword id="KW-0968">Cytoplasmic vesicle</keyword>
<keyword id="KW-0268">Exocytosis</keyword>
<keyword id="KW-0472">Membrane</keyword>
<keyword id="KW-0597">Phosphoprotein</keyword>
<keyword id="KW-0653">Protein transport</keyword>
<keyword id="KW-1267">Proteomics identification</keyword>
<keyword id="KW-1185">Reference proteome</keyword>
<keyword id="KW-0677">Repeat</keyword>
<keyword id="KW-0770">Synapse</keyword>
<keyword id="KW-0813">Transport</keyword>
<keyword id="KW-0853">WD repeat</keyword>